<gene>
    <name evidence="1" type="primary">pheS</name>
    <name type="ordered locus">FN2123</name>
</gene>
<sequence length="338" mass="39168">MKEEILKVKEEIQTYIKESKTLQRLEEIRVNYMGKKGIFTELSKKMKDLSVEERPKIGQIINEVKEKINSLLDERNKALKEKELNERLESEIIDISLPGTKYNYGTIHPINETMELMKNIFSKMGFDIVDGPEIETVEYNFDALNIPKTHPSRDLTDTFYLNDSIVLRTQTSPVQIRYMLEHGTPFRMICPGKVYRPDYDISHTPMFHQMEGLVVGKDISFADLKGILTHFVKEVFGDRKVRFRPHFFPFTEPSAEMDVECMICHGDGCRLCKESGWIEIMGCGMVDPEVLKYVGLNPDEVNGFAFGVGIERVTMLRHGIGDLRAFFENDMRFLKQFK</sequence>
<feature type="chain" id="PRO_0000126707" description="Phenylalanine--tRNA ligase alpha subunit">
    <location>
        <begin position="1"/>
        <end position="338"/>
    </location>
</feature>
<feature type="binding site" evidence="1">
    <location>
        <position position="252"/>
    </location>
    <ligand>
        <name>Mg(2+)</name>
        <dbReference type="ChEBI" id="CHEBI:18420"/>
        <note>shared with beta subunit</note>
    </ligand>
</feature>
<comment type="catalytic activity">
    <reaction evidence="1">
        <text>tRNA(Phe) + L-phenylalanine + ATP = L-phenylalanyl-tRNA(Phe) + AMP + diphosphate + H(+)</text>
        <dbReference type="Rhea" id="RHEA:19413"/>
        <dbReference type="Rhea" id="RHEA-COMP:9668"/>
        <dbReference type="Rhea" id="RHEA-COMP:9699"/>
        <dbReference type="ChEBI" id="CHEBI:15378"/>
        <dbReference type="ChEBI" id="CHEBI:30616"/>
        <dbReference type="ChEBI" id="CHEBI:33019"/>
        <dbReference type="ChEBI" id="CHEBI:58095"/>
        <dbReference type="ChEBI" id="CHEBI:78442"/>
        <dbReference type="ChEBI" id="CHEBI:78531"/>
        <dbReference type="ChEBI" id="CHEBI:456215"/>
        <dbReference type="EC" id="6.1.1.20"/>
    </reaction>
</comment>
<comment type="cofactor">
    <cofactor evidence="1">
        <name>Mg(2+)</name>
        <dbReference type="ChEBI" id="CHEBI:18420"/>
    </cofactor>
    <text evidence="1">Binds 2 magnesium ions per tetramer.</text>
</comment>
<comment type="subunit">
    <text evidence="1">Tetramer of two alpha and two beta subunits.</text>
</comment>
<comment type="subcellular location">
    <subcellularLocation>
        <location evidence="1">Cytoplasm</location>
    </subcellularLocation>
</comment>
<comment type="similarity">
    <text evidence="1">Belongs to the class-II aminoacyl-tRNA synthetase family. Phe-tRNA synthetase alpha subunit type 1 subfamily.</text>
</comment>
<proteinExistence type="inferred from homology"/>
<dbReference type="EC" id="6.1.1.20" evidence="1"/>
<dbReference type="EMBL" id="AE009951">
    <property type="protein sequence ID" value="AAL94207.1"/>
    <property type="molecule type" value="Genomic_DNA"/>
</dbReference>
<dbReference type="RefSeq" id="NP_602908.1">
    <property type="nucleotide sequence ID" value="NC_003454.1"/>
</dbReference>
<dbReference type="SMR" id="Q8RHB4"/>
<dbReference type="FunCoup" id="Q8RHB4">
    <property type="interactions" value="365"/>
</dbReference>
<dbReference type="STRING" id="190304.FN2123"/>
<dbReference type="PaxDb" id="190304-FN2123"/>
<dbReference type="EnsemblBacteria" id="AAL94207">
    <property type="protein sequence ID" value="AAL94207"/>
    <property type="gene ID" value="FN2123"/>
</dbReference>
<dbReference type="KEGG" id="fnu:FN2123"/>
<dbReference type="PATRIC" id="fig|190304.8.peg.585"/>
<dbReference type="eggNOG" id="COG0016">
    <property type="taxonomic scope" value="Bacteria"/>
</dbReference>
<dbReference type="HOGENOM" id="CLU_025086_0_1_0"/>
<dbReference type="InParanoid" id="Q8RHB4"/>
<dbReference type="BioCyc" id="FNUC190304:G1FZS-608-MONOMER"/>
<dbReference type="Proteomes" id="UP000002521">
    <property type="component" value="Chromosome"/>
</dbReference>
<dbReference type="GO" id="GO:0005737">
    <property type="term" value="C:cytoplasm"/>
    <property type="evidence" value="ECO:0000318"/>
    <property type="project" value="GO_Central"/>
</dbReference>
<dbReference type="GO" id="GO:0005524">
    <property type="term" value="F:ATP binding"/>
    <property type="evidence" value="ECO:0007669"/>
    <property type="project" value="UniProtKB-UniRule"/>
</dbReference>
<dbReference type="GO" id="GO:0000287">
    <property type="term" value="F:magnesium ion binding"/>
    <property type="evidence" value="ECO:0007669"/>
    <property type="project" value="UniProtKB-UniRule"/>
</dbReference>
<dbReference type="GO" id="GO:0004826">
    <property type="term" value="F:phenylalanine-tRNA ligase activity"/>
    <property type="evidence" value="ECO:0000318"/>
    <property type="project" value="GO_Central"/>
</dbReference>
<dbReference type="GO" id="GO:0000049">
    <property type="term" value="F:tRNA binding"/>
    <property type="evidence" value="ECO:0007669"/>
    <property type="project" value="InterPro"/>
</dbReference>
<dbReference type="GO" id="GO:0006432">
    <property type="term" value="P:phenylalanyl-tRNA aminoacylation"/>
    <property type="evidence" value="ECO:0000318"/>
    <property type="project" value="GO_Central"/>
</dbReference>
<dbReference type="CDD" id="cd00496">
    <property type="entry name" value="PheRS_alpha_core"/>
    <property type="match status" value="1"/>
</dbReference>
<dbReference type="FunFam" id="3.30.930.10:FF:000003">
    <property type="entry name" value="Phenylalanine--tRNA ligase alpha subunit"/>
    <property type="match status" value="1"/>
</dbReference>
<dbReference type="Gene3D" id="3.30.930.10">
    <property type="entry name" value="Bira Bifunctional Protein, Domain 2"/>
    <property type="match status" value="1"/>
</dbReference>
<dbReference type="HAMAP" id="MF_00281">
    <property type="entry name" value="Phe_tRNA_synth_alpha1"/>
    <property type="match status" value="1"/>
</dbReference>
<dbReference type="InterPro" id="IPR006195">
    <property type="entry name" value="aa-tRNA-synth_II"/>
</dbReference>
<dbReference type="InterPro" id="IPR045864">
    <property type="entry name" value="aa-tRNA-synth_II/BPL/LPL"/>
</dbReference>
<dbReference type="InterPro" id="IPR004529">
    <property type="entry name" value="Phe-tRNA-synth_IIc_asu"/>
</dbReference>
<dbReference type="InterPro" id="IPR004188">
    <property type="entry name" value="Phe-tRNA_ligase_II_N"/>
</dbReference>
<dbReference type="InterPro" id="IPR022911">
    <property type="entry name" value="Phe_tRNA_ligase_alpha1_bac"/>
</dbReference>
<dbReference type="InterPro" id="IPR002319">
    <property type="entry name" value="Phenylalanyl-tRNA_Synthase"/>
</dbReference>
<dbReference type="InterPro" id="IPR010978">
    <property type="entry name" value="tRNA-bd_arm"/>
</dbReference>
<dbReference type="NCBIfam" id="TIGR00468">
    <property type="entry name" value="pheS"/>
    <property type="match status" value="1"/>
</dbReference>
<dbReference type="PANTHER" id="PTHR11538:SF41">
    <property type="entry name" value="PHENYLALANINE--TRNA LIGASE, MITOCHONDRIAL"/>
    <property type="match status" value="1"/>
</dbReference>
<dbReference type="PANTHER" id="PTHR11538">
    <property type="entry name" value="PHENYLALANYL-TRNA SYNTHETASE"/>
    <property type="match status" value="1"/>
</dbReference>
<dbReference type="Pfam" id="PF02912">
    <property type="entry name" value="Phe_tRNA-synt_N"/>
    <property type="match status" value="1"/>
</dbReference>
<dbReference type="Pfam" id="PF01409">
    <property type="entry name" value="tRNA-synt_2d"/>
    <property type="match status" value="1"/>
</dbReference>
<dbReference type="SUPFAM" id="SSF55681">
    <property type="entry name" value="Class II aaRS and biotin synthetases"/>
    <property type="match status" value="1"/>
</dbReference>
<dbReference type="SUPFAM" id="SSF46589">
    <property type="entry name" value="tRNA-binding arm"/>
    <property type="match status" value="1"/>
</dbReference>
<dbReference type="PROSITE" id="PS50862">
    <property type="entry name" value="AA_TRNA_LIGASE_II"/>
    <property type="match status" value="1"/>
</dbReference>
<organism>
    <name type="scientific">Fusobacterium nucleatum subsp. nucleatum (strain ATCC 25586 / DSM 15643 / BCRC 10681 / CIP 101130 / JCM 8532 / KCTC 2640 / LMG 13131 / VPI 4355)</name>
    <dbReference type="NCBI Taxonomy" id="190304"/>
    <lineage>
        <taxon>Bacteria</taxon>
        <taxon>Fusobacteriati</taxon>
        <taxon>Fusobacteriota</taxon>
        <taxon>Fusobacteriia</taxon>
        <taxon>Fusobacteriales</taxon>
        <taxon>Fusobacteriaceae</taxon>
        <taxon>Fusobacterium</taxon>
    </lineage>
</organism>
<accession>Q8RHB4</accession>
<evidence type="ECO:0000255" key="1">
    <source>
        <dbReference type="HAMAP-Rule" id="MF_00281"/>
    </source>
</evidence>
<keyword id="KW-0030">Aminoacyl-tRNA synthetase</keyword>
<keyword id="KW-0067">ATP-binding</keyword>
<keyword id="KW-0963">Cytoplasm</keyword>
<keyword id="KW-0436">Ligase</keyword>
<keyword id="KW-0460">Magnesium</keyword>
<keyword id="KW-0479">Metal-binding</keyword>
<keyword id="KW-0547">Nucleotide-binding</keyword>
<keyword id="KW-0648">Protein biosynthesis</keyword>
<keyword id="KW-1185">Reference proteome</keyword>
<protein>
    <recommendedName>
        <fullName evidence="1">Phenylalanine--tRNA ligase alpha subunit</fullName>
        <ecNumber evidence="1">6.1.1.20</ecNumber>
    </recommendedName>
    <alternativeName>
        <fullName evidence="1">Phenylalanyl-tRNA synthetase alpha subunit</fullName>
        <shortName evidence="1">PheRS</shortName>
    </alternativeName>
</protein>
<name>SYFA_FUSNN</name>
<reference key="1">
    <citation type="journal article" date="2002" name="J. Bacteriol.">
        <title>Genome sequence and analysis of the oral bacterium Fusobacterium nucleatum strain ATCC 25586.</title>
        <authorList>
            <person name="Kapatral V."/>
            <person name="Anderson I."/>
            <person name="Ivanova N."/>
            <person name="Reznik G."/>
            <person name="Los T."/>
            <person name="Lykidis A."/>
            <person name="Bhattacharyya A."/>
            <person name="Bartman A."/>
            <person name="Gardner W."/>
            <person name="Grechkin G."/>
            <person name="Zhu L."/>
            <person name="Vasieva O."/>
            <person name="Chu L."/>
            <person name="Kogan Y."/>
            <person name="Chaga O."/>
            <person name="Goltsman E."/>
            <person name="Bernal A."/>
            <person name="Larsen N."/>
            <person name="D'Souza M."/>
            <person name="Walunas T."/>
            <person name="Pusch G."/>
            <person name="Haselkorn R."/>
            <person name="Fonstein M."/>
            <person name="Kyrpides N.C."/>
            <person name="Overbeek R."/>
        </authorList>
    </citation>
    <scope>NUCLEOTIDE SEQUENCE [LARGE SCALE GENOMIC DNA]</scope>
    <source>
        <strain>ATCC 25586 / DSM 15643 / BCRC 10681 / CIP 101130 / JCM 8532 / KCTC 2640 / LMG 13131 / VPI 4355</strain>
    </source>
</reference>